<protein>
    <recommendedName>
        <fullName evidence="1">RNA-directed RNA polymerase catalytic subunit</fullName>
        <ecNumber evidence="1">2.7.7.48</ecNumber>
    </recommendedName>
    <alternativeName>
        <fullName evidence="1">Polymerase basic protein 1</fullName>
        <shortName evidence="1">PB1</shortName>
    </alternativeName>
    <alternativeName>
        <fullName evidence="1">RNA-directed RNA polymerase subunit P1</fullName>
    </alternativeName>
</protein>
<proteinExistence type="inferred from homology"/>
<keyword id="KW-1262">Eukaryotic host gene expression shutoff by virus</keyword>
<keyword id="KW-1191">Eukaryotic host transcription shutoff by virus</keyword>
<keyword id="KW-1035">Host cytoplasm</keyword>
<keyword id="KW-1190">Host gene expression shutoff by virus</keyword>
<keyword id="KW-1048">Host nucleus</keyword>
<keyword id="KW-0945">Host-virus interaction</keyword>
<keyword id="KW-1104">Inhibition of host RNA polymerase II by virus</keyword>
<keyword id="KW-0547">Nucleotide-binding</keyword>
<keyword id="KW-0548">Nucleotidyltransferase</keyword>
<keyword id="KW-0597">Phosphoprotein</keyword>
<keyword id="KW-0696">RNA-directed RNA polymerase</keyword>
<keyword id="KW-0808">Transferase</keyword>
<keyword id="KW-0693">Viral RNA replication</keyword>
<keyword id="KW-1195">Viral transcription</keyword>
<comment type="function">
    <text evidence="1">RNA-dependent RNA polymerase which is responsible for replication and transcription of virus RNA segments. The transcription of viral mRNAs occurs by a unique mechanism called cap-snatching. 5' methylated caps of cellular mRNAs are cleaved after 10-13 nucleotides by PA. In turn, these short capped RNAs are used as primers by PB1 for transcription of viral mRNAs. During virus replication, PB1 initiates RNA synthesis and copy vRNA into complementary RNA (cRNA) which in turn serves as a template for the production of more vRNAs.</text>
</comment>
<comment type="catalytic activity">
    <reaction evidence="1">
        <text>RNA(n) + a ribonucleoside 5'-triphosphate = RNA(n+1) + diphosphate</text>
        <dbReference type="Rhea" id="RHEA:21248"/>
        <dbReference type="Rhea" id="RHEA-COMP:14527"/>
        <dbReference type="Rhea" id="RHEA-COMP:17342"/>
        <dbReference type="ChEBI" id="CHEBI:33019"/>
        <dbReference type="ChEBI" id="CHEBI:61557"/>
        <dbReference type="ChEBI" id="CHEBI:140395"/>
        <dbReference type="EC" id="2.7.7.48"/>
    </reaction>
</comment>
<comment type="subunit">
    <text evidence="1">Influenza RNA polymerase is composed of three subunits: PB1, PB2 and PA. Interacts (via N-terminus) with PA (via C-terminus). Interacts (via C-terminus) with PB2 (via N-terminus); this interaction is essential for transcription initiation.</text>
</comment>
<comment type="subcellular location">
    <subcellularLocation>
        <location evidence="1">Host nucleus</location>
    </subcellularLocation>
    <subcellularLocation>
        <location evidence="1">Host cytoplasm</location>
    </subcellularLocation>
</comment>
<comment type="PTM">
    <text evidence="1">Phosphorylated by host PRKCA.</text>
</comment>
<comment type="similarity">
    <text evidence="1">Belongs to the influenza viruses polymerase PB1 family.</text>
</comment>
<accession>O91741</accession>
<dbReference type="EC" id="2.7.7.48" evidence="1"/>
<dbReference type="EMBL" id="AF037418">
    <property type="protein sequence ID" value="AAC63449.1"/>
    <property type="molecule type" value="Genomic_RNA"/>
</dbReference>
<dbReference type="SMR" id="O91741"/>
<dbReference type="GO" id="GO:0030430">
    <property type="term" value="C:host cell cytoplasm"/>
    <property type="evidence" value="ECO:0007669"/>
    <property type="project" value="UniProtKB-SubCell"/>
</dbReference>
<dbReference type="GO" id="GO:0042025">
    <property type="term" value="C:host cell nucleus"/>
    <property type="evidence" value="ECO:0007669"/>
    <property type="project" value="UniProtKB-SubCell"/>
</dbReference>
<dbReference type="GO" id="GO:0000166">
    <property type="term" value="F:nucleotide binding"/>
    <property type="evidence" value="ECO:0007669"/>
    <property type="project" value="UniProtKB-UniRule"/>
</dbReference>
<dbReference type="GO" id="GO:0003723">
    <property type="term" value="F:RNA binding"/>
    <property type="evidence" value="ECO:0007669"/>
    <property type="project" value="InterPro"/>
</dbReference>
<dbReference type="GO" id="GO:0003968">
    <property type="term" value="F:RNA-directed RNA polymerase activity"/>
    <property type="evidence" value="ECO:0007669"/>
    <property type="project" value="UniProtKB-UniRule"/>
</dbReference>
<dbReference type="GO" id="GO:0006351">
    <property type="term" value="P:DNA-templated transcription"/>
    <property type="evidence" value="ECO:0007669"/>
    <property type="project" value="UniProtKB-UniRule"/>
</dbReference>
<dbReference type="GO" id="GO:0039657">
    <property type="term" value="P:symbiont-mediated suppression of host gene expression"/>
    <property type="evidence" value="ECO:0007669"/>
    <property type="project" value="UniProtKB-KW"/>
</dbReference>
<dbReference type="GO" id="GO:0039523">
    <property type="term" value="P:symbiont-mediated suppression of host mRNA transcription via inhibition of RNA polymerase II activity"/>
    <property type="evidence" value="ECO:0007669"/>
    <property type="project" value="UniProtKB-UniRule"/>
</dbReference>
<dbReference type="GO" id="GO:0039694">
    <property type="term" value="P:viral RNA genome replication"/>
    <property type="evidence" value="ECO:0007669"/>
    <property type="project" value="UniProtKB-UniRule"/>
</dbReference>
<dbReference type="GO" id="GO:0019083">
    <property type="term" value="P:viral transcription"/>
    <property type="evidence" value="ECO:0007669"/>
    <property type="project" value="UniProtKB-KW"/>
</dbReference>
<dbReference type="Gene3D" id="6.10.140.720">
    <property type="match status" value="1"/>
</dbReference>
<dbReference type="HAMAP" id="MF_04065">
    <property type="entry name" value="INFV_RDRP"/>
    <property type="match status" value="1"/>
</dbReference>
<dbReference type="InterPro" id="IPR007099">
    <property type="entry name" value="RNA-dir_pol_NSvirus"/>
</dbReference>
<dbReference type="InterPro" id="IPR001407">
    <property type="entry name" value="RNA_pol_PB1_influenza"/>
</dbReference>
<dbReference type="Pfam" id="PF00602">
    <property type="entry name" value="Flu_PB1"/>
    <property type="match status" value="1"/>
</dbReference>
<dbReference type="PIRSF" id="PIRSF000827">
    <property type="entry name" value="RdRPol_OMV"/>
    <property type="match status" value="1"/>
</dbReference>
<dbReference type="PROSITE" id="PS50525">
    <property type="entry name" value="RDRP_SSRNA_NEG_SEG"/>
    <property type="match status" value="1"/>
</dbReference>
<evidence type="ECO:0000255" key="1">
    <source>
        <dbReference type="HAMAP-Rule" id="MF_04065"/>
    </source>
</evidence>
<evidence type="ECO:0000256" key="2">
    <source>
        <dbReference type="SAM" id="MobiDB-lite"/>
    </source>
</evidence>
<organism>
    <name type="scientific">Influenza A virus (strain A/Kitakyushu/159/1993 H3N2)</name>
    <dbReference type="NCBI Taxonomy" id="62478"/>
    <lineage>
        <taxon>Viruses</taxon>
        <taxon>Riboviria</taxon>
        <taxon>Orthornavirae</taxon>
        <taxon>Negarnaviricota</taxon>
        <taxon>Polyploviricotina</taxon>
        <taxon>Insthoviricetes</taxon>
        <taxon>Articulavirales</taxon>
        <taxon>Orthomyxoviridae</taxon>
        <taxon>Alphainfluenzavirus</taxon>
        <taxon>Alphainfluenzavirus influenzae</taxon>
        <taxon>Influenza A virus</taxon>
    </lineage>
</organism>
<name>RDRP_I93A0</name>
<feature type="chain" id="PRO_0000078755" description="RNA-directed RNA polymerase catalytic subunit">
    <location>
        <begin position="1"/>
        <end position="757"/>
    </location>
</feature>
<feature type="domain" description="RdRp catalytic" evidence="1">
    <location>
        <begin position="286"/>
        <end position="483"/>
    </location>
</feature>
<feature type="region of interest" description="Disordered" evidence="2">
    <location>
        <begin position="52"/>
        <end position="82"/>
    </location>
</feature>
<feature type="region of interest" description="Promoter-binding site" evidence="1">
    <location>
        <begin position="249"/>
        <end position="256"/>
    </location>
</feature>
<feature type="short sequence motif" description="Nuclear localization signal" evidence="1">
    <location>
        <begin position="187"/>
        <end position="195"/>
    </location>
</feature>
<feature type="short sequence motif" description="Nuclear localization signal" evidence="1">
    <location>
        <begin position="203"/>
        <end position="216"/>
    </location>
</feature>
<feature type="compositionally biased region" description="Polar residues" evidence="2">
    <location>
        <begin position="55"/>
        <end position="64"/>
    </location>
</feature>
<sequence length="757" mass="86395">MDVNPTLLFLKVPAQNAISTTFPYTGDPPYSHGTGTGYTMDTVNRTHQYSERGKWTTNTETGAPQLNPIDGPLPEDNEPSGYAQTDCVLEAMAFLEESHPGIFENSCLETMEVVQQTRVDKLTQGRQTYDWTLNRNQPAATALANTIEVFRSNGLTANESGRLIDFLKDVMESMDKEEIEITTHFQRKRRVRDNMTKKMVTQRTIGKKKQRVNKRSYLIRALTLNTMTKDAERGKLKRRAIATPGMQIRGFVYFVETLARSICEKLEQSGLPVGGNEKKAKLANVVRKMMTNSQDTELSFTITGDNTKWNENQNPRMFLAMITYITKNQPEWFRNILSIAPIMFSNKMARLGKGYMFESKRMKLRTQIPAEMLASIDLKYFNESTRKKIEKIRPLLIDGTASLSPGMMMGMFNMLSTVLGVSILNLGQKKYTKTTYWWDGLQSSDDFALIVNAPNHEGIQAGVDRFYRTCKLVGINMSKKKSYINKTGTFEFTSFFYRYGFVANFSMELPSFGVSGINESADMSIGVTVIKNNMINNDLGPATAQMALQLFIKDYRYTYRCHRGDTQIQTRRSFELKKLWDQTQSKAGLLVSDGGPNLYNIRNLHIPEVCLKWELMDEDYQGRLCNPLNPFVSHKEIESVNNAVVMPAHGPAKSMEYDAVATTHSWIPKRNRSILNTSQRGILEDEQMYQKCCNLFEKFFPSSSYRRPVGISSMVEAMVSRARIDARIDFESGRIKKEEFSEIMKICSTIEELRRQK</sequence>
<organismHost>
    <name type="scientific">Aves</name>
    <dbReference type="NCBI Taxonomy" id="8782"/>
</organismHost>
<organismHost>
    <name type="scientific">Homo sapiens</name>
    <name type="common">Human</name>
    <dbReference type="NCBI Taxonomy" id="9606"/>
</organismHost>
<organismHost>
    <name type="scientific">Phocidae</name>
    <name type="common">true seals</name>
    <dbReference type="NCBI Taxonomy" id="9709"/>
</organismHost>
<organismHost>
    <name type="scientific">Sus scrofa</name>
    <name type="common">Pig</name>
    <dbReference type="NCBI Taxonomy" id="9823"/>
</organismHost>
<reference key="1">
    <citation type="journal article" date="1998" name="J. Virol.">
        <title>Phylogenetic analysis of the entire genome of influenza A (H3N2) viruses from Japan: evidence for genetic reassortment of the six internal genes.</title>
        <authorList>
            <person name="Lindstrom S.E."/>
            <person name="Hiromoto Y."/>
            <person name="Nerome R."/>
            <person name="Omoe K."/>
            <person name="Sugita S."/>
            <person name="Yamazaki Y."/>
            <person name="Takahashi T."/>
            <person name="Nerome K."/>
        </authorList>
    </citation>
    <scope>NUCLEOTIDE SEQUENCE [GENOMIC RNA]</scope>
</reference>
<gene>
    <name evidence="1" type="primary">PB1</name>
</gene>